<name>FCTA_ECO27</name>
<protein>
    <recommendedName>
        <fullName>Formyl-CoA:oxalate CoA-transferase</fullName>
        <shortName>FCOCT</shortName>
        <ecNumber evidence="2">2.8.3.16</ecNumber>
    </recommendedName>
    <alternativeName>
        <fullName evidence="2">Formyl-coenzyme A transferase</fullName>
        <shortName evidence="2">Formyl-CoA transferase</shortName>
    </alternativeName>
</protein>
<organism>
    <name type="scientific">Escherichia coli O127:H6 (strain E2348/69 / EPEC)</name>
    <dbReference type="NCBI Taxonomy" id="574521"/>
    <lineage>
        <taxon>Bacteria</taxon>
        <taxon>Pseudomonadati</taxon>
        <taxon>Pseudomonadota</taxon>
        <taxon>Gammaproteobacteria</taxon>
        <taxon>Enterobacterales</taxon>
        <taxon>Enterobacteriaceae</taxon>
        <taxon>Escherichia</taxon>
    </lineage>
</organism>
<accession>B7UG84</accession>
<proteinExistence type="inferred from homology"/>
<sequence>MSTPLQGIKVLDFTGVQSGPSCTQMLAWFGADVIKIERPGVGDVTRHQLRDIPDIDALYFTMLNSNKRSIELNTKTAEGKEVMEKLIREADILVENFHPGAIDHMGFTWEHIQEINPRLIFGSIKGFDECSPYVNVKAYENVAQAAGGAASTTGFWDGPPLVSAAALGDSNTGMHLLIGLLAALLHREKTGRGQRVTMSMQDAVLNLCRVKLRDQQRLDKLGYLEEYPQYPNGTFGDAVPRGGNAGGGGQPGWILKCKGWETDPNAYIYFTIQEQNWENTCKAIGKPEWITDPAYSTAHARQPHIFDIFAEIEKYTVTIDKHEAVAYLTQFDIPCAPVLSMKEISLDPSLRQSGSVVEVEQPLRGKYLTVGCPMKFSAFTPDIKAAPLLGEHTAAVLQELGYSDDEIAAMKQNHAI</sequence>
<comment type="function">
    <text evidence="1">Involved in the catabolism of oxalate and in the adapatation to low pH via the induction of the oxalate-dependent acid tolerance response (ATR). Catalyzes the transfer of the CoA moiety from formyl-CoA to oxalate (By similarity).</text>
</comment>
<comment type="catalytic activity">
    <reaction evidence="2">
        <text>formyl-CoA + oxalate = oxalyl-CoA + formate</text>
        <dbReference type="Rhea" id="RHEA:16545"/>
        <dbReference type="ChEBI" id="CHEBI:15740"/>
        <dbReference type="ChEBI" id="CHEBI:30623"/>
        <dbReference type="ChEBI" id="CHEBI:57376"/>
        <dbReference type="ChEBI" id="CHEBI:57388"/>
        <dbReference type="EC" id="2.8.3.16"/>
    </reaction>
</comment>
<comment type="pathway">
    <text evidence="2">Metabolic intermediate degradation; oxalate degradation; CO(2) and formate from oxalate: step 1/2.</text>
</comment>
<comment type="subunit">
    <text evidence="2">Homodimer.</text>
</comment>
<comment type="similarity">
    <text evidence="2">Belongs to the CoA-transferase III family. Frc subfamily.</text>
</comment>
<gene>
    <name evidence="2" type="primary">frc</name>
    <name type="ordered locus">E2348C_2567</name>
</gene>
<feature type="chain" id="PRO_1000148309" description="Formyl-CoA:oxalate CoA-transferase">
    <location>
        <begin position="1"/>
        <end position="416"/>
    </location>
</feature>
<feature type="active site" description="Nucleophile" evidence="2">
    <location>
        <position position="169"/>
    </location>
</feature>
<feature type="binding site" evidence="1">
    <location>
        <begin position="17"/>
        <end position="18"/>
    </location>
    <ligand>
        <name>CoA</name>
        <dbReference type="ChEBI" id="CHEBI:57287"/>
    </ligand>
</feature>
<feature type="binding site" evidence="2">
    <location>
        <position position="38"/>
    </location>
    <ligand>
        <name>CoA</name>
        <dbReference type="ChEBI" id="CHEBI:57287"/>
    </ligand>
</feature>
<feature type="binding site" evidence="1">
    <location>
        <begin position="72"/>
        <end position="75"/>
    </location>
    <ligand>
        <name>CoA</name>
        <dbReference type="ChEBI" id="CHEBI:57287"/>
    </ligand>
</feature>
<feature type="binding site" evidence="1">
    <location>
        <begin position="96"/>
        <end position="98"/>
    </location>
    <ligand>
        <name>CoA</name>
        <dbReference type="ChEBI" id="CHEBI:57287"/>
    </ligand>
</feature>
<feature type="binding site" evidence="2">
    <location>
        <position position="104"/>
    </location>
    <ligand>
        <name>CoA</name>
        <dbReference type="ChEBI" id="CHEBI:57287"/>
    </ligand>
</feature>
<feature type="binding site" evidence="1">
    <location>
        <begin position="137"/>
        <end position="140"/>
    </location>
    <ligand>
        <name>CoA</name>
        <dbReference type="ChEBI" id="CHEBI:57287"/>
    </ligand>
</feature>
<feature type="binding site" evidence="1">
    <location>
        <begin position="248"/>
        <end position="250"/>
    </location>
    <ligand>
        <name>substrate</name>
    </ligand>
</feature>
<feature type="binding site" evidence="1">
    <location>
        <begin position="273"/>
        <end position="275"/>
    </location>
    <ligand>
        <name>CoA</name>
        <dbReference type="ChEBI" id="CHEBI:57287"/>
    </ligand>
</feature>
<keyword id="KW-1185">Reference proteome</keyword>
<keyword id="KW-0808">Transferase</keyword>
<reference key="1">
    <citation type="journal article" date="2009" name="J. Bacteriol.">
        <title>Complete genome sequence and comparative genome analysis of enteropathogenic Escherichia coli O127:H6 strain E2348/69.</title>
        <authorList>
            <person name="Iguchi A."/>
            <person name="Thomson N.R."/>
            <person name="Ogura Y."/>
            <person name="Saunders D."/>
            <person name="Ooka T."/>
            <person name="Henderson I.R."/>
            <person name="Harris D."/>
            <person name="Asadulghani M."/>
            <person name="Kurokawa K."/>
            <person name="Dean P."/>
            <person name="Kenny B."/>
            <person name="Quail M.A."/>
            <person name="Thurston S."/>
            <person name="Dougan G."/>
            <person name="Hayashi T."/>
            <person name="Parkhill J."/>
            <person name="Frankel G."/>
        </authorList>
    </citation>
    <scope>NUCLEOTIDE SEQUENCE [LARGE SCALE GENOMIC DNA]</scope>
    <source>
        <strain>E2348/69 / EPEC</strain>
    </source>
</reference>
<dbReference type="EC" id="2.8.3.16" evidence="2"/>
<dbReference type="EMBL" id="FM180568">
    <property type="protein sequence ID" value="CAS10115.1"/>
    <property type="molecule type" value="Genomic_DNA"/>
</dbReference>
<dbReference type="RefSeq" id="WP_000106759.1">
    <property type="nucleotide sequence ID" value="NC_011601.1"/>
</dbReference>
<dbReference type="SMR" id="B7UG84"/>
<dbReference type="GeneID" id="75202557"/>
<dbReference type="KEGG" id="ecg:E2348C_2567"/>
<dbReference type="HOGENOM" id="CLU_033975_2_1_6"/>
<dbReference type="UniPathway" id="UPA00540">
    <property type="reaction ID" value="UER00598"/>
</dbReference>
<dbReference type="Proteomes" id="UP000008205">
    <property type="component" value="Chromosome"/>
</dbReference>
<dbReference type="GO" id="GO:0033608">
    <property type="term" value="F:formyl-CoA transferase activity"/>
    <property type="evidence" value="ECO:0007669"/>
    <property type="project" value="UniProtKB-EC"/>
</dbReference>
<dbReference type="GO" id="GO:0033611">
    <property type="term" value="P:oxalate catabolic process"/>
    <property type="evidence" value="ECO:0007669"/>
    <property type="project" value="UniProtKB-UniRule"/>
</dbReference>
<dbReference type="Gene3D" id="3.40.50.10540">
    <property type="entry name" value="Crotonobetainyl-coa:carnitine coa-transferase, domain 1"/>
    <property type="match status" value="1"/>
</dbReference>
<dbReference type="Gene3D" id="3.30.1540.10">
    <property type="entry name" value="formyl-coa transferase, domain 3"/>
    <property type="match status" value="1"/>
</dbReference>
<dbReference type="HAMAP" id="MF_00742">
    <property type="entry name" value="Formyl_CoA_transfer"/>
    <property type="match status" value="1"/>
</dbReference>
<dbReference type="InterPro" id="IPR050483">
    <property type="entry name" value="CoA-transferase_III_domain"/>
</dbReference>
<dbReference type="InterPro" id="IPR003673">
    <property type="entry name" value="CoA-Trfase_fam_III"/>
</dbReference>
<dbReference type="InterPro" id="IPR044855">
    <property type="entry name" value="CoA-Trfase_III_dom3_sf"/>
</dbReference>
<dbReference type="InterPro" id="IPR023606">
    <property type="entry name" value="CoA-Trfase_III_dom_1_sf"/>
</dbReference>
<dbReference type="InterPro" id="IPR017659">
    <property type="entry name" value="Formyl_CoA_transfer"/>
</dbReference>
<dbReference type="NCBIfam" id="TIGR03253">
    <property type="entry name" value="oxalate_frc"/>
    <property type="match status" value="1"/>
</dbReference>
<dbReference type="NCBIfam" id="NF003809">
    <property type="entry name" value="PRK05398.1"/>
    <property type="match status" value="1"/>
</dbReference>
<dbReference type="PANTHER" id="PTHR48207">
    <property type="entry name" value="SUCCINATE--HYDROXYMETHYLGLUTARATE COA-TRANSFERASE"/>
    <property type="match status" value="1"/>
</dbReference>
<dbReference type="PANTHER" id="PTHR48207:SF3">
    <property type="entry name" value="SUCCINATE--HYDROXYMETHYLGLUTARATE COA-TRANSFERASE"/>
    <property type="match status" value="1"/>
</dbReference>
<dbReference type="Pfam" id="PF02515">
    <property type="entry name" value="CoA_transf_3"/>
    <property type="match status" value="1"/>
</dbReference>
<dbReference type="SUPFAM" id="SSF89796">
    <property type="entry name" value="CoA-transferase family III (CaiB/BaiF)"/>
    <property type="match status" value="1"/>
</dbReference>
<evidence type="ECO:0000250" key="1"/>
<evidence type="ECO:0000255" key="2">
    <source>
        <dbReference type="HAMAP-Rule" id="MF_00742"/>
    </source>
</evidence>